<proteinExistence type="inferred from homology"/>
<protein>
    <recommendedName>
        <fullName>Lipid-A-disaccharide synthase</fullName>
        <ecNumber>2.4.1.182</ecNumber>
    </recommendedName>
</protein>
<keyword id="KW-0328">Glycosyltransferase</keyword>
<keyword id="KW-0441">Lipid A biosynthesis</keyword>
<keyword id="KW-0444">Lipid biosynthesis</keyword>
<keyword id="KW-0443">Lipid metabolism</keyword>
<keyword id="KW-1185">Reference proteome</keyword>
<keyword id="KW-0808">Transferase</keyword>
<name>LPXB_RICPR</name>
<feature type="chain" id="PRO_0000190182" description="Lipid-A-disaccharide synthase">
    <location>
        <begin position="1"/>
        <end position="380"/>
    </location>
</feature>
<comment type="function">
    <text evidence="1">Condensation of UDP-2,3-diacylglucosamine and 2,3-diacylglucosamine-1-phosphate to form lipid A disaccharide, a precursor of lipid A, a phosphorylated glycolipid that anchors the lipopolysaccharide to the outer membrane of the cell.</text>
</comment>
<comment type="catalytic activity">
    <reaction>
        <text>a lipid X + a UDP-2-N,3-O-bis[(3R)-3-hydroxyacyl]-alpha-D-glucosamine = a lipid A disaccharide + UDP + H(+)</text>
        <dbReference type="Rhea" id="RHEA:67828"/>
        <dbReference type="ChEBI" id="CHEBI:15378"/>
        <dbReference type="ChEBI" id="CHEBI:58223"/>
        <dbReference type="ChEBI" id="CHEBI:137748"/>
        <dbReference type="ChEBI" id="CHEBI:176338"/>
        <dbReference type="ChEBI" id="CHEBI:176343"/>
        <dbReference type="EC" id="2.4.1.182"/>
    </reaction>
</comment>
<comment type="pathway">
    <text>Bacterial outer membrane biogenesis; LPS lipid A biosynthesis.</text>
</comment>
<comment type="similarity">
    <text evidence="2">Belongs to the LpxB family.</text>
</comment>
<sequence length="380" mass="43249">MKKIYFIAGEMSGDFIGGHVIQNLKSNEGLEFTGIGGKYMEEAGNFKSLFTITAINLIGFIEIIPHLLKIKKLIDKTVEHIINSKADLLITIDSPGFTYRVAKRVRKLLPNLKMIHIVAPSVWAYKADRAVNYAKIYDCLFALLPFEPPYFTKVGLDCRYIGHPIMEQEFYRDKIALRKELKIDENERILCVTLGTRKGEILRHLPIFIDAIQEISKDYKNLTIIFPLAHPDHEAIIKPFLDNIQFNYLFLSNERLKAYAVSDLALAKSGTNTLEISASGTPMVVAYKVNIISFIIIMLLIKIKYVSLINIIAGSEIIPEFIQFNCKANLISNKLKELLSNSQKRYNQVVKSKKILQKLGFESNRSPSYIAAKIIKQEFL</sequence>
<dbReference type="EC" id="2.4.1.182"/>
<dbReference type="EMBL" id="AJ235271">
    <property type="protein sequence ID" value="CAA14781.1"/>
    <property type="molecule type" value="Genomic_DNA"/>
</dbReference>
<dbReference type="PIR" id="C71688">
    <property type="entry name" value="C71688"/>
</dbReference>
<dbReference type="RefSeq" id="NP_220704.1">
    <property type="nucleotide sequence ID" value="NC_000963.1"/>
</dbReference>
<dbReference type="RefSeq" id="WP_004597431.1">
    <property type="nucleotide sequence ID" value="NC_000963.1"/>
</dbReference>
<dbReference type="SMR" id="Q9ZDK7"/>
<dbReference type="STRING" id="272947.gene:17555401"/>
<dbReference type="CAZy" id="GT19">
    <property type="family name" value="Glycosyltransferase Family 19"/>
</dbReference>
<dbReference type="EnsemblBacteria" id="CAA14781">
    <property type="protein sequence ID" value="CAA14781"/>
    <property type="gene ID" value="CAA14781"/>
</dbReference>
<dbReference type="GeneID" id="57569447"/>
<dbReference type="KEGG" id="rpr:RP321"/>
<dbReference type="PATRIC" id="fig|272947.5.peg.330"/>
<dbReference type="eggNOG" id="COG0763">
    <property type="taxonomic scope" value="Bacteria"/>
</dbReference>
<dbReference type="HOGENOM" id="CLU_036577_2_0_5"/>
<dbReference type="OrthoDB" id="9801642at2"/>
<dbReference type="UniPathway" id="UPA00973"/>
<dbReference type="Proteomes" id="UP000002480">
    <property type="component" value="Chromosome"/>
</dbReference>
<dbReference type="GO" id="GO:0016020">
    <property type="term" value="C:membrane"/>
    <property type="evidence" value="ECO:0007669"/>
    <property type="project" value="GOC"/>
</dbReference>
<dbReference type="GO" id="GO:0008915">
    <property type="term" value="F:lipid-A-disaccharide synthase activity"/>
    <property type="evidence" value="ECO:0007669"/>
    <property type="project" value="UniProtKB-UniRule"/>
</dbReference>
<dbReference type="GO" id="GO:0005543">
    <property type="term" value="F:phospholipid binding"/>
    <property type="evidence" value="ECO:0007669"/>
    <property type="project" value="TreeGrafter"/>
</dbReference>
<dbReference type="GO" id="GO:0009245">
    <property type="term" value="P:lipid A biosynthetic process"/>
    <property type="evidence" value="ECO:0007669"/>
    <property type="project" value="UniProtKB-UniRule"/>
</dbReference>
<dbReference type="HAMAP" id="MF_00392">
    <property type="entry name" value="LpxB"/>
    <property type="match status" value="1"/>
</dbReference>
<dbReference type="InterPro" id="IPR003835">
    <property type="entry name" value="Glyco_trans_19"/>
</dbReference>
<dbReference type="NCBIfam" id="TIGR00215">
    <property type="entry name" value="lpxB"/>
    <property type="match status" value="1"/>
</dbReference>
<dbReference type="PANTHER" id="PTHR30372">
    <property type="entry name" value="LIPID-A-DISACCHARIDE SYNTHASE"/>
    <property type="match status" value="1"/>
</dbReference>
<dbReference type="PANTHER" id="PTHR30372:SF4">
    <property type="entry name" value="LIPID-A-DISACCHARIDE SYNTHASE, MITOCHONDRIAL-RELATED"/>
    <property type="match status" value="1"/>
</dbReference>
<dbReference type="Pfam" id="PF02684">
    <property type="entry name" value="LpxB"/>
    <property type="match status" value="1"/>
</dbReference>
<dbReference type="SUPFAM" id="SSF53756">
    <property type="entry name" value="UDP-Glycosyltransferase/glycogen phosphorylase"/>
    <property type="match status" value="1"/>
</dbReference>
<gene>
    <name type="primary">lpxB</name>
    <name type="ordered locus">RP321</name>
</gene>
<accession>Q9ZDK7</accession>
<evidence type="ECO:0000250" key="1"/>
<evidence type="ECO:0000305" key="2"/>
<reference key="1">
    <citation type="journal article" date="1998" name="Nature">
        <title>The genome sequence of Rickettsia prowazekii and the origin of mitochondria.</title>
        <authorList>
            <person name="Andersson S.G.E."/>
            <person name="Zomorodipour A."/>
            <person name="Andersson J.O."/>
            <person name="Sicheritz-Ponten T."/>
            <person name="Alsmark U.C.M."/>
            <person name="Podowski R.M."/>
            <person name="Naeslund A.K."/>
            <person name="Eriksson A.-S."/>
            <person name="Winkler H.H."/>
            <person name="Kurland C.G."/>
        </authorList>
    </citation>
    <scope>NUCLEOTIDE SEQUENCE [LARGE SCALE GENOMIC DNA]</scope>
    <source>
        <strain>Madrid E</strain>
    </source>
</reference>
<organism>
    <name type="scientific">Rickettsia prowazekii (strain Madrid E)</name>
    <dbReference type="NCBI Taxonomy" id="272947"/>
    <lineage>
        <taxon>Bacteria</taxon>
        <taxon>Pseudomonadati</taxon>
        <taxon>Pseudomonadota</taxon>
        <taxon>Alphaproteobacteria</taxon>
        <taxon>Rickettsiales</taxon>
        <taxon>Rickettsiaceae</taxon>
        <taxon>Rickettsieae</taxon>
        <taxon>Rickettsia</taxon>
        <taxon>typhus group</taxon>
    </lineage>
</organism>